<gene>
    <name evidence="1" type="primary">rpsF</name>
    <name type="ordered locus">bll4079</name>
</gene>
<protein>
    <recommendedName>
        <fullName evidence="1">Small ribosomal subunit protein bS6</fullName>
    </recommendedName>
    <alternativeName>
        <fullName evidence="3">30S ribosomal protein S6</fullName>
    </alternativeName>
</protein>
<dbReference type="EMBL" id="BA000040">
    <property type="protein sequence ID" value="BAC49344.1"/>
    <property type="molecule type" value="Genomic_DNA"/>
</dbReference>
<dbReference type="RefSeq" id="NP_770719.1">
    <property type="nucleotide sequence ID" value="NC_004463.1"/>
</dbReference>
<dbReference type="RefSeq" id="WP_011086854.1">
    <property type="nucleotide sequence ID" value="NC_004463.1"/>
</dbReference>
<dbReference type="SMR" id="Q89MW3"/>
<dbReference type="FunCoup" id="Q89MW3">
    <property type="interactions" value="704"/>
</dbReference>
<dbReference type="STRING" id="224911.AAV28_17425"/>
<dbReference type="EnsemblBacteria" id="BAC49344">
    <property type="protein sequence ID" value="BAC49344"/>
    <property type="gene ID" value="BAC49344"/>
</dbReference>
<dbReference type="GeneID" id="46491083"/>
<dbReference type="KEGG" id="bja:bll4079"/>
<dbReference type="PATRIC" id="fig|224911.44.peg.3785"/>
<dbReference type="eggNOG" id="COG0360">
    <property type="taxonomic scope" value="Bacteria"/>
</dbReference>
<dbReference type="HOGENOM" id="CLU_113441_2_0_5"/>
<dbReference type="InParanoid" id="Q89MW3"/>
<dbReference type="OrthoDB" id="9812702at2"/>
<dbReference type="PhylomeDB" id="Q89MW3"/>
<dbReference type="Proteomes" id="UP000002526">
    <property type="component" value="Chromosome"/>
</dbReference>
<dbReference type="GO" id="GO:0022627">
    <property type="term" value="C:cytosolic small ribosomal subunit"/>
    <property type="evidence" value="ECO:0000318"/>
    <property type="project" value="GO_Central"/>
</dbReference>
<dbReference type="GO" id="GO:0070181">
    <property type="term" value="F:small ribosomal subunit rRNA binding"/>
    <property type="evidence" value="ECO:0000318"/>
    <property type="project" value="GO_Central"/>
</dbReference>
<dbReference type="GO" id="GO:0003735">
    <property type="term" value="F:structural constituent of ribosome"/>
    <property type="evidence" value="ECO:0000318"/>
    <property type="project" value="GO_Central"/>
</dbReference>
<dbReference type="GO" id="GO:0006412">
    <property type="term" value="P:translation"/>
    <property type="evidence" value="ECO:0007669"/>
    <property type="project" value="UniProtKB-UniRule"/>
</dbReference>
<dbReference type="CDD" id="cd00473">
    <property type="entry name" value="bS6"/>
    <property type="match status" value="1"/>
</dbReference>
<dbReference type="Gene3D" id="3.30.70.60">
    <property type="match status" value="1"/>
</dbReference>
<dbReference type="HAMAP" id="MF_00360">
    <property type="entry name" value="Ribosomal_bS6"/>
    <property type="match status" value="1"/>
</dbReference>
<dbReference type="InterPro" id="IPR000529">
    <property type="entry name" value="Ribosomal_bS6"/>
</dbReference>
<dbReference type="InterPro" id="IPR035980">
    <property type="entry name" value="Ribosomal_bS6_sf"/>
</dbReference>
<dbReference type="InterPro" id="IPR020814">
    <property type="entry name" value="Ribosomal_S6_plastid/chlpt"/>
</dbReference>
<dbReference type="InterPro" id="IPR014717">
    <property type="entry name" value="Transl_elong_EF1B/ribsomal_bS6"/>
</dbReference>
<dbReference type="NCBIfam" id="TIGR00166">
    <property type="entry name" value="S6"/>
    <property type="match status" value="1"/>
</dbReference>
<dbReference type="PANTHER" id="PTHR21011">
    <property type="entry name" value="MITOCHONDRIAL 28S RIBOSOMAL PROTEIN S6"/>
    <property type="match status" value="1"/>
</dbReference>
<dbReference type="PANTHER" id="PTHR21011:SF1">
    <property type="entry name" value="SMALL RIBOSOMAL SUBUNIT PROTEIN BS6M"/>
    <property type="match status" value="1"/>
</dbReference>
<dbReference type="Pfam" id="PF01250">
    <property type="entry name" value="Ribosomal_S6"/>
    <property type="match status" value="1"/>
</dbReference>
<dbReference type="SUPFAM" id="SSF54995">
    <property type="entry name" value="Ribosomal protein S6"/>
    <property type="match status" value="1"/>
</dbReference>
<proteinExistence type="inferred from homology"/>
<evidence type="ECO:0000255" key="1">
    <source>
        <dbReference type="HAMAP-Rule" id="MF_00360"/>
    </source>
</evidence>
<evidence type="ECO:0000256" key="2">
    <source>
        <dbReference type="SAM" id="MobiDB-lite"/>
    </source>
</evidence>
<evidence type="ECO:0000305" key="3"/>
<feature type="chain" id="PRO_0000176737" description="Small ribosomal subunit protein bS6">
    <location>
        <begin position="1"/>
        <end position="166"/>
    </location>
</feature>
<feature type="region of interest" description="Disordered" evidence="2">
    <location>
        <begin position="97"/>
        <end position="166"/>
    </location>
</feature>
<feature type="compositionally biased region" description="Basic and acidic residues" evidence="2">
    <location>
        <begin position="105"/>
        <end position="159"/>
    </location>
</feature>
<sequence>MALYEHVFLARQDASPQQVEELTAQMTGIVEGLGGKVTKTENWGVRSLTYRMNKNRKAHFVLLNIDAPSAAIAEIERQERISEDVIRYLSVRVEELEEGPSAMMRKADRDRERDDRGGGFRGEREGGFRGDREGGFRGGDRDGGGFRGDRGPRRPREEAETATDGE</sequence>
<reference key="1">
    <citation type="journal article" date="2002" name="DNA Res.">
        <title>Complete genomic sequence of nitrogen-fixing symbiotic bacterium Bradyrhizobium japonicum USDA110.</title>
        <authorList>
            <person name="Kaneko T."/>
            <person name="Nakamura Y."/>
            <person name="Sato S."/>
            <person name="Minamisawa K."/>
            <person name="Uchiumi T."/>
            <person name="Sasamoto S."/>
            <person name="Watanabe A."/>
            <person name="Idesawa K."/>
            <person name="Iriguchi M."/>
            <person name="Kawashima K."/>
            <person name="Kohara M."/>
            <person name="Matsumoto M."/>
            <person name="Shimpo S."/>
            <person name="Tsuruoka H."/>
            <person name="Wada T."/>
            <person name="Yamada M."/>
            <person name="Tabata S."/>
        </authorList>
    </citation>
    <scope>NUCLEOTIDE SEQUENCE [LARGE SCALE GENOMIC DNA]</scope>
    <source>
        <strain>JCM 10833 / BCRC 13528 / IAM 13628 / NBRC 14792 / USDA 110</strain>
    </source>
</reference>
<keyword id="KW-1185">Reference proteome</keyword>
<keyword id="KW-0687">Ribonucleoprotein</keyword>
<keyword id="KW-0689">Ribosomal protein</keyword>
<keyword id="KW-0694">RNA-binding</keyword>
<keyword id="KW-0699">rRNA-binding</keyword>
<comment type="function">
    <text evidence="1">Binds together with bS18 to 16S ribosomal RNA.</text>
</comment>
<comment type="similarity">
    <text evidence="1">Belongs to the bacterial ribosomal protein bS6 family.</text>
</comment>
<organism>
    <name type="scientific">Bradyrhizobium diazoefficiens (strain JCM 10833 / BCRC 13528 / IAM 13628 / NBRC 14792 / USDA 110)</name>
    <dbReference type="NCBI Taxonomy" id="224911"/>
    <lineage>
        <taxon>Bacteria</taxon>
        <taxon>Pseudomonadati</taxon>
        <taxon>Pseudomonadota</taxon>
        <taxon>Alphaproteobacteria</taxon>
        <taxon>Hyphomicrobiales</taxon>
        <taxon>Nitrobacteraceae</taxon>
        <taxon>Bradyrhizobium</taxon>
    </lineage>
</organism>
<accession>Q89MW3</accession>
<name>RS6_BRADU</name>